<evidence type="ECO:0000255" key="1">
    <source>
        <dbReference type="HAMAP-Rule" id="MF_01398"/>
    </source>
</evidence>
<proteinExistence type="inferred from homology"/>
<feature type="chain" id="PRO_0000368513" description="ATP synthase subunit b">
    <location>
        <begin position="1"/>
        <end position="156"/>
    </location>
</feature>
<feature type="transmembrane region" description="Helical" evidence="1">
    <location>
        <begin position="11"/>
        <end position="31"/>
    </location>
</feature>
<reference key="1">
    <citation type="journal article" date="2007" name="Genome Biol.">
        <title>Characterization and modeling of the Haemophilus influenzae core and supragenomes based on the complete genomic sequences of Rd and 12 clinical nontypeable strains.</title>
        <authorList>
            <person name="Hogg J.S."/>
            <person name="Hu F.Z."/>
            <person name="Janto B."/>
            <person name="Boissy R."/>
            <person name="Hayes J."/>
            <person name="Keefe R."/>
            <person name="Post J.C."/>
            <person name="Ehrlich G.D."/>
        </authorList>
    </citation>
    <scope>NUCLEOTIDE SEQUENCE [LARGE SCALE GENOMIC DNA]</scope>
    <source>
        <strain>PittEE</strain>
    </source>
</reference>
<sequence length="156" mass="17158">MNLNATLIGQLIAFALFVWFCMKFVWPPIINAIETRQSQIANALASAEAAKKEQADTKNLVEQELSAAKVQAQDILDAANKRRNEVLDEVKAEAEELKAKIIAQGYAEVEAERKRVQEELRLKVASLAVAGAEKIVGRSIDEAANNDIIDKLVAEL</sequence>
<name>ATPF_HAEIE</name>
<protein>
    <recommendedName>
        <fullName evidence="1">ATP synthase subunit b</fullName>
    </recommendedName>
    <alternativeName>
        <fullName evidence="1">ATP synthase F(0) sector subunit b</fullName>
    </alternativeName>
    <alternativeName>
        <fullName evidence="1">ATPase subunit I</fullName>
    </alternativeName>
    <alternativeName>
        <fullName evidence="1">F-type ATPase subunit b</fullName>
        <shortName evidence="1">F-ATPase subunit b</shortName>
    </alternativeName>
</protein>
<keyword id="KW-0066">ATP synthesis</keyword>
<keyword id="KW-0997">Cell inner membrane</keyword>
<keyword id="KW-1003">Cell membrane</keyword>
<keyword id="KW-0138">CF(0)</keyword>
<keyword id="KW-0375">Hydrogen ion transport</keyword>
<keyword id="KW-0406">Ion transport</keyword>
<keyword id="KW-0472">Membrane</keyword>
<keyword id="KW-0812">Transmembrane</keyword>
<keyword id="KW-1133">Transmembrane helix</keyword>
<keyword id="KW-0813">Transport</keyword>
<organism>
    <name type="scientific">Haemophilus influenzae (strain PittEE)</name>
    <dbReference type="NCBI Taxonomy" id="374930"/>
    <lineage>
        <taxon>Bacteria</taxon>
        <taxon>Pseudomonadati</taxon>
        <taxon>Pseudomonadota</taxon>
        <taxon>Gammaproteobacteria</taxon>
        <taxon>Pasteurellales</taxon>
        <taxon>Pasteurellaceae</taxon>
        <taxon>Haemophilus</taxon>
    </lineage>
</organism>
<comment type="function">
    <text evidence="1">F(1)F(0) ATP synthase produces ATP from ADP in the presence of a proton or sodium gradient. F-type ATPases consist of two structural domains, F(1) containing the extramembraneous catalytic core and F(0) containing the membrane proton channel, linked together by a central stalk and a peripheral stalk. During catalysis, ATP synthesis in the catalytic domain of F(1) is coupled via a rotary mechanism of the central stalk subunits to proton translocation.</text>
</comment>
<comment type="function">
    <text evidence="1">Component of the F(0) channel, it forms part of the peripheral stalk, linking F(1) to F(0).</text>
</comment>
<comment type="subunit">
    <text evidence="1">F-type ATPases have 2 components, F(1) - the catalytic core - and F(0) - the membrane proton channel. F(1) has five subunits: alpha(3), beta(3), gamma(1), delta(1), epsilon(1). F(0) has three main subunits: a(1), b(2) and c(10-14). The alpha and beta chains form an alternating ring which encloses part of the gamma chain. F(1) is attached to F(0) by a central stalk formed by the gamma and epsilon chains, while a peripheral stalk is formed by the delta and b chains.</text>
</comment>
<comment type="subcellular location">
    <subcellularLocation>
        <location evidence="1">Cell inner membrane</location>
        <topology evidence="1">Single-pass membrane protein</topology>
    </subcellularLocation>
</comment>
<comment type="similarity">
    <text evidence="1">Belongs to the ATPase B chain family.</text>
</comment>
<accession>A5UA07</accession>
<gene>
    <name evidence="1" type="primary">atpF</name>
    <name type="ordered locus">CGSHiEE_00570</name>
</gene>
<dbReference type="EMBL" id="CP000671">
    <property type="protein sequence ID" value="ABQ97608.1"/>
    <property type="molecule type" value="Genomic_DNA"/>
</dbReference>
<dbReference type="SMR" id="A5UA07"/>
<dbReference type="KEGG" id="hip:CGSHiEE_00570"/>
<dbReference type="HOGENOM" id="CLU_079215_4_5_6"/>
<dbReference type="GO" id="GO:0005886">
    <property type="term" value="C:plasma membrane"/>
    <property type="evidence" value="ECO:0007669"/>
    <property type="project" value="UniProtKB-SubCell"/>
</dbReference>
<dbReference type="GO" id="GO:0045259">
    <property type="term" value="C:proton-transporting ATP synthase complex"/>
    <property type="evidence" value="ECO:0007669"/>
    <property type="project" value="UniProtKB-KW"/>
</dbReference>
<dbReference type="GO" id="GO:0046933">
    <property type="term" value="F:proton-transporting ATP synthase activity, rotational mechanism"/>
    <property type="evidence" value="ECO:0007669"/>
    <property type="project" value="UniProtKB-UniRule"/>
</dbReference>
<dbReference type="GO" id="GO:0046961">
    <property type="term" value="F:proton-transporting ATPase activity, rotational mechanism"/>
    <property type="evidence" value="ECO:0007669"/>
    <property type="project" value="TreeGrafter"/>
</dbReference>
<dbReference type="CDD" id="cd06503">
    <property type="entry name" value="ATP-synt_Fo_b"/>
    <property type="match status" value="1"/>
</dbReference>
<dbReference type="FunFam" id="1.20.5.620:FF:000001">
    <property type="entry name" value="ATP synthase subunit b"/>
    <property type="match status" value="1"/>
</dbReference>
<dbReference type="Gene3D" id="1.20.5.620">
    <property type="entry name" value="F1F0 ATP synthase subunit B, membrane domain"/>
    <property type="match status" value="1"/>
</dbReference>
<dbReference type="HAMAP" id="MF_01398">
    <property type="entry name" value="ATP_synth_b_bprime"/>
    <property type="match status" value="1"/>
</dbReference>
<dbReference type="InterPro" id="IPR028987">
    <property type="entry name" value="ATP_synth_B-like_membr_sf"/>
</dbReference>
<dbReference type="InterPro" id="IPR002146">
    <property type="entry name" value="ATP_synth_b/b'su_bac/chlpt"/>
</dbReference>
<dbReference type="InterPro" id="IPR005864">
    <property type="entry name" value="ATP_synth_F0_bsu_bac"/>
</dbReference>
<dbReference type="InterPro" id="IPR050059">
    <property type="entry name" value="ATP_synthase_B_chain"/>
</dbReference>
<dbReference type="NCBIfam" id="TIGR01144">
    <property type="entry name" value="ATP_synt_b"/>
    <property type="match status" value="1"/>
</dbReference>
<dbReference type="NCBIfam" id="NF004411">
    <property type="entry name" value="PRK05759.1-2"/>
    <property type="match status" value="1"/>
</dbReference>
<dbReference type="NCBIfam" id="NF004413">
    <property type="entry name" value="PRK05759.1-4"/>
    <property type="match status" value="1"/>
</dbReference>
<dbReference type="PANTHER" id="PTHR33445:SF1">
    <property type="entry name" value="ATP SYNTHASE SUBUNIT B"/>
    <property type="match status" value="1"/>
</dbReference>
<dbReference type="PANTHER" id="PTHR33445">
    <property type="entry name" value="ATP SYNTHASE SUBUNIT B', CHLOROPLASTIC"/>
    <property type="match status" value="1"/>
</dbReference>
<dbReference type="Pfam" id="PF00430">
    <property type="entry name" value="ATP-synt_B"/>
    <property type="match status" value="1"/>
</dbReference>
<dbReference type="SUPFAM" id="SSF81573">
    <property type="entry name" value="F1F0 ATP synthase subunit B, membrane domain"/>
    <property type="match status" value="1"/>
</dbReference>